<accession>D2Y234</accession>
<feature type="signal peptide" evidence="3">
    <location>
        <begin position="1"/>
        <end position="21"/>
    </location>
</feature>
<feature type="propeptide" id="PRO_0000400572" evidence="2">
    <location>
        <begin position="22"/>
        <end position="49"/>
    </location>
</feature>
<feature type="peptide" id="PRO_0000400573" description="Mu-theraphotoxin-Hhn1c">
    <location>
        <begin position="50"/>
        <end position="84"/>
    </location>
</feature>
<feature type="modified residue" description="Isoleucine amide" evidence="1">
    <location>
        <position position="84"/>
    </location>
</feature>
<feature type="disulfide bond" evidence="2">
    <location>
        <begin position="51"/>
        <end position="66"/>
    </location>
</feature>
<feature type="disulfide bond" evidence="2">
    <location>
        <begin position="58"/>
        <end position="73"/>
    </location>
</feature>
<feature type="disulfide bond" evidence="2">
    <location>
        <begin position="65"/>
        <end position="80"/>
    </location>
</feature>
<keyword id="KW-0027">Amidation</keyword>
<keyword id="KW-1015">Disulfide bond</keyword>
<keyword id="KW-0872">Ion channel impairing toxin</keyword>
<keyword id="KW-0960">Knottin</keyword>
<keyword id="KW-0528">Neurotoxin</keyword>
<keyword id="KW-0638">Presynaptic neurotoxin</keyword>
<keyword id="KW-0964">Secreted</keyword>
<keyword id="KW-0732">Signal</keyword>
<keyword id="KW-0800">Toxin</keyword>
<keyword id="KW-0738">Voltage-gated sodium channel impairing toxin</keyword>
<evidence type="ECO:0000250" key="1"/>
<evidence type="ECO:0000250" key="2">
    <source>
        <dbReference type="UniProtKB" id="D2Y232"/>
    </source>
</evidence>
<evidence type="ECO:0000255" key="3"/>
<evidence type="ECO:0000305" key="4"/>
<name>H4B01_CYRHA</name>
<sequence length="86" mass="9475">MKASMFLALAGLALLFVVCYASESEEKEFSNELLSSVLAVDDNSKGEERECLGFGKGCNPSNDQCCKSSNLVCSRKHRRCKYEIGK</sequence>
<protein>
    <recommendedName>
        <fullName>Mu-theraphotoxin-Hhn1c</fullName>
        <shortName>Mu-TRTX-Hhn1c</shortName>
    </recommendedName>
    <alternativeName>
        <fullName>Hainantoxin-IV-2</fullName>
        <shortName>HNTX-IV-2</shortName>
    </alternativeName>
</protein>
<dbReference type="EMBL" id="GU292911">
    <property type="protein sequence ID" value="ADB56727.1"/>
    <property type="molecule type" value="mRNA"/>
</dbReference>
<dbReference type="BMRB" id="D2Y234"/>
<dbReference type="SMR" id="D2Y234"/>
<dbReference type="ArachnoServer" id="AS001548">
    <property type="toxin name" value="mu-theraphotoxin-Hhn1c"/>
</dbReference>
<dbReference type="GO" id="GO:0005576">
    <property type="term" value="C:extracellular region"/>
    <property type="evidence" value="ECO:0007669"/>
    <property type="project" value="UniProtKB-SubCell"/>
</dbReference>
<dbReference type="GO" id="GO:0044231">
    <property type="term" value="C:host cell presynaptic membrane"/>
    <property type="evidence" value="ECO:0007669"/>
    <property type="project" value="UniProtKB-KW"/>
</dbReference>
<dbReference type="GO" id="GO:0008200">
    <property type="term" value="F:ion channel inhibitor activity"/>
    <property type="evidence" value="ECO:0007669"/>
    <property type="project" value="InterPro"/>
</dbReference>
<dbReference type="GO" id="GO:0017080">
    <property type="term" value="F:sodium channel regulator activity"/>
    <property type="evidence" value="ECO:0007669"/>
    <property type="project" value="UniProtKB-KW"/>
</dbReference>
<dbReference type="GO" id="GO:0090729">
    <property type="term" value="F:toxin activity"/>
    <property type="evidence" value="ECO:0007669"/>
    <property type="project" value="UniProtKB-KW"/>
</dbReference>
<dbReference type="InterPro" id="IPR011696">
    <property type="entry name" value="Huwentoxin-1"/>
</dbReference>
<dbReference type="Pfam" id="PF07740">
    <property type="entry name" value="Toxin_12"/>
    <property type="match status" value="1"/>
</dbReference>
<dbReference type="SUPFAM" id="SSF57059">
    <property type="entry name" value="omega toxin-like"/>
    <property type="match status" value="1"/>
</dbReference>
<proteinExistence type="evidence at transcript level"/>
<organism>
    <name type="scientific">Cyriopagopus hainanus</name>
    <name type="common">Chinese bird spider</name>
    <name type="synonym">Haplopelma hainanum</name>
    <dbReference type="NCBI Taxonomy" id="209901"/>
    <lineage>
        <taxon>Eukaryota</taxon>
        <taxon>Metazoa</taxon>
        <taxon>Ecdysozoa</taxon>
        <taxon>Arthropoda</taxon>
        <taxon>Chelicerata</taxon>
        <taxon>Arachnida</taxon>
        <taxon>Araneae</taxon>
        <taxon>Mygalomorphae</taxon>
        <taxon>Theraphosidae</taxon>
        <taxon>Haplopelma</taxon>
    </lineage>
</organism>
<reference key="1">
    <citation type="journal article" date="2010" name="J. Proteome Res.">
        <title>Molecular diversification of peptide toxins from the tarantula Haplopelma hainanum (Ornithoctonus hainana) venom based on transcriptomic, peptidomic, and genomic analyses.</title>
        <authorList>
            <person name="Tang X."/>
            <person name="Zhang Y."/>
            <person name="Hu W."/>
            <person name="Xu D."/>
            <person name="Tao H."/>
            <person name="Yang X."/>
            <person name="Li Y."/>
            <person name="Jiang L."/>
            <person name="Liang S."/>
        </authorList>
    </citation>
    <scope>NUCLEOTIDE SEQUENCE [LARGE SCALE MRNA]</scope>
    <source>
        <tissue>Venom gland</tissue>
    </source>
</reference>
<comment type="function">
    <text evidence="2">Neurotoxin. Selectively blocks neuronal tetrodotoxin-sensitive voltage-gated sodium channels (Nav). Does not affect tetrodotoxin-resistant voltage-gated sodium channels or calcium channels.</text>
</comment>
<comment type="subunit">
    <text evidence="1">Monomer.</text>
</comment>
<comment type="subcellular location">
    <subcellularLocation>
        <location evidence="1">Secreted</location>
    </subcellularLocation>
</comment>
<comment type="tissue specificity">
    <text>Expressed by the venom gland.</text>
</comment>
<comment type="domain">
    <text evidence="1">The presence of a 'disulfide through disulfide knot' structurally defines this protein as a knottin.</text>
</comment>
<comment type="similarity">
    <text evidence="4">Belongs to the neurotoxin 10 (Hwtx-1) family. 22 (Htx-4) subfamily.</text>
</comment>